<keyword id="KW-0025">Alternative splicing</keyword>
<keyword id="KW-0433">Leucine-rich repeat</keyword>
<keyword id="KW-1267">Proteomics identification</keyword>
<keyword id="KW-1185">Reference proteome</keyword>
<keyword id="KW-0677">Repeat</keyword>
<feature type="chain" id="PRO_0000313625" description="Leucine-rich repeat- and IQ domain-containing protein 1">
    <location>
        <begin position="1"/>
        <end position="1722"/>
    </location>
</feature>
<feature type="domain" description="IQ 1" evidence="1">
    <location>
        <begin position="283"/>
        <end position="312"/>
    </location>
</feature>
<feature type="repeat" description="LRR 1">
    <location>
        <begin position="819"/>
        <end position="840"/>
    </location>
</feature>
<feature type="repeat" description="LRR 2">
    <location>
        <begin position="841"/>
        <end position="861"/>
    </location>
</feature>
<feature type="repeat" description="LRR 3">
    <location>
        <begin position="862"/>
        <end position="883"/>
    </location>
</feature>
<feature type="repeat" description="LRR 4">
    <location>
        <begin position="884"/>
        <end position="905"/>
    </location>
</feature>
<feature type="repeat" description="LRR 5">
    <location>
        <begin position="970"/>
        <end position="991"/>
    </location>
</feature>
<feature type="repeat" description="LRR 6">
    <location>
        <begin position="992"/>
        <end position="1013"/>
    </location>
</feature>
<feature type="repeat" description="LRR 7">
    <location>
        <begin position="1014"/>
        <end position="1035"/>
    </location>
</feature>
<feature type="repeat" description="LRR 8">
    <location>
        <begin position="1036"/>
        <end position="1057"/>
    </location>
</feature>
<feature type="repeat" description="LRR 9">
    <location>
        <begin position="1060"/>
        <end position="1081"/>
    </location>
</feature>
<feature type="repeat" description="LRR 10">
    <location>
        <begin position="1082"/>
        <end position="1103"/>
    </location>
</feature>
<feature type="domain" description="LRRCT">
    <location>
        <begin position="1117"/>
        <end position="1157"/>
    </location>
</feature>
<feature type="domain" description="IQ 2" evidence="1">
    <location>
        <begin position="1335"/>
        <end position="1364"/>
    </location>
</feature>
<feature type="domain" description="IQ 3" evidence="1">
    <location>
        <begin position="1395"/>
        <end position="1424"/>
    </location>
</feature>
<feature type="region of interest" description="Disordered" evidence="2">
    <location>
        <begin position="23"/>
        <end position="47"/>
    </location>
</feature>
<feature type="region of interest" description="Disordered" evidence="2">
    <location>
        <begin position="182"/>
        <end position="202"/>
    </location>
</feature>
<feature type="region of interest" description="Disordered" evidence="2">
    <location>
        <begin position="265"/>
        <end position="285"/>
    </location>
</feature>
<feature type="region of interest" description="Disordered" evidence="2">
    <location>
        <begin position="319"/>
        <end position="367"/>
    </location>
</feature>
<feature type="region of interest" description="Disordered" evidence="2">
    <location>
        <begin position="1506"/>
        <end position="1534"/>
    </location>
</feature>
<feature type="compositionally biased region" description="Acidic residues" evidence="2">
    <location>
        <begin position="38"/>
        <end position="47"/>
    </location>
</feature>
<feature type="compositionally biased region" description="Basic and acidic residues" evidence="2">
    <location>
        <begin position="265"/>
        <end position="278"/>
    </location>
</feature>
<feature type="compositionally biased region" description="Polar residues" evidence="2">
    <location>
        <begin position="1506"/>
        <end position="1524"/>
    </location>
</feature>
<feature type="splice variant" id="VSP_030065" description="In isoform 2." evidence="5">
    <location>
        <begin position="227"/>
        <end position="251"/>
    </location>
</feature>
<feature type="sequence variant" id="VAR_037672" description="In dbSNP:rs7312075." evidence="4">
    <original>I</original>
    <variation>N</variation>
    <location>
        <position position="29"/>
    </location>
</feature>
<feature type="sequence variant" id="VAR_037673" description="In dbSNP:rs3765044." evidence="4">
    <original>C</original>
    <variation>Y</variation>
    <location>
        <position position="83"/>
    </location>
</feature>
<feature type="sequence variant" id="VAR_037674" description="In dbSNP:rs17012533." evidence="3">
    <original>A</original>
    <variation>T</variation>
    <location>
        <position position="912"/>
    </location>
</feature>
<name>LRIQ1_HUMAN</name>
<accession>Q96JM4</accession>
<accession>Q567P4</accession>
<accession>Q9BS17</accession>
<accession>Q9HA36</accession>
<organism>
    <name type="scientific">Homo sapiens</name>
    <name type="common">Human</name>
    <dbReference type="NCBI Taxonomy" id="9606"/>
    <lineage>
        <taxon>Eukaryota</taxon>
        <taxon>Metazoa</taxon>
        <taxon>Chordata</taxon>
        <taxon>Craniata</taxon>
        <taxon>Vertebrata</taxon>
        <taxon>Euteleostomi</taxon>
        <taxon>Mammalia</taxon>
        <taxon>Eutheria</taxon>
        <taxon>Euarchontoglires</taxon>
        <taxon>Primates</taxon>
        <taxon>Haplorrhini</taxon>
        <taxon>Catarrhini</taxon>
        <taxon>Hominidae</taxon>
        <taxon>Homo</taxon>
    </lineage>
</organism>
<dbReference type="EMBL" id="AC025418">
    <property type="status" value="NOT_ANNOTATED_CDS"/>
    <property type="molecule type" value="Genomic_DNA"/>
</dbReference>
<dbReference type="EMBL" id="AC079631">
    <property type="status" value="NOT_ANNOTATED_CDS"/>
    <property type="molecule type" value="Genomic_DNA"/>
</dbReference>
<dbReference type="EMBL" id="AC133794">
    <property type="status" value="NOT_ANNOTATED_CDS"/>
    <property type="molecule type" value="Genomic_DNA"/>
</dbReference>
<dbReference type="EMBL" id="AK022365">
    <property type="protein sequence ID" value="BAB14022.1"/>
    <property type="molecule type" value="mRNA"/>
</dbReference>
<dbReference type="EMBL" id="BC093088">
    <property type="protein sequence ID" value="AAH93088.1"/>
    <property type="status" value="ALT_SEQ"/>
    <property type="molecule type" value="mRNA"/>
</dbReference>
<dbReference type="EMBL" id="AB058704">
    <property type="protein sequence ID" value="BAB47430.1"/>
    <property type="status" value="ALT_SEQ"/>
    <property type="molecule type" value="mRNA"/>
</dbReference>
<dbReference type="CCDS" id="CCDS41816.1">
    <molecule id="Q96JM4-4"/>
</dbReference>
<dbReference type="RefSeq" id="NP_001073379.1">
    <molecule id="Q96JM4-4"/>
    <property type="nucleotide sequence ID" value="NM_001079910.2"/>
</dbReference>
<dbReference type="RefSeq" id="XP_016875508.1">
    <property type="nucleotide sequence ID" value="XM_017020019.1"/>
</dbReference>
<dbReference type="SMR" id="Q96JM4"/>
<dbReference type="BioGRID" id="123899">
    <property type="interactions" value="46"/>
</dbReference>
<dbReference type="FunCoup" id="Q96JM4">
    <property type="interactions" value="34"/>
</dbReference>
<dbReference type="IntAct" id="Q96JM4">
    <property type="interactions" value="33"/>
</dbReference>
<dbReference type="STRING" id="9606.ENSP00000376910"/>
<dbReference type="GlyGen" id="Q96JM4">
    <property type="glycosylation" value="1 site, 1 O-linked glycan (1 site)"/>
</dbReference>
<dbReference type="iPTMnet" id="Q96JM4"/>
<dbReference type="PhosphoSitePlus" id="Q96JM4"/>
<dbReference type="BioMuta" id="LRRIQ1"/>
<dbReference type="DMDM" id="322510118"/>
<dbReference type="jPOST" id="Q96JM4"/>
<dbReference type="MassIVE" id="Q96JM4"/>
<dbReference type="PaxDb" id="9606-ENSP00000376910"/>
<dbReference type="PeptideAtlas" id="Q96JM4"/>
<dbReference type="ProteomicsDB" id="76985">
    <molecule id="Q96JM4-4"/>
</dbReference>
<dbReference type="ProteomicsDB" id="76986">
    <molecule id="Q96JM4-2"/>
</dbReference>
<dbReference type="Antibodypedia" id="52101">
    <property type="antibodies" value="17 antibodies from 8 providers"/>
</dbReference>
<dbReference type="DNASU" id="84125"/>
<dbReference type="Ensembl" id="ENST00000393217.7">
    <molecule id="Q96JM4-4"/>
    <property type="protein sequence ID" value="ENSP00000376910.2"/>
    <property type="gene ID" value="ENSG00000133640.20"/>
</dbReference>
<dbReference type="GeneID" id="84125"/>
<dbReference type="KEGG" id="hsa:84125"/>
<dbReference type="MANE-Select" id="ENST00000393217.7">
    <property type="protein sequence ID" value="ENSP00000376910.2"/>
    <property type="RefSeq nucleotide sequence ID" value="NM_001079910.2"/>
    <property type="RefSeq protein sequence ID" value="NP_001073379.1"/>
</dbReference>
<dbReference type="UCSC" id="uc001tac.4">
    <molecule id="Q96JM4-4"/>
    <property type="organism name" value="human"/>
</dbReference>
<dbReference type="AGR" id="HGNC:25708"/>
<dbReference type="CTD" id="84125"/>
<dbReference type="DisGeNET" id="84125"/>
<dbReference type="GeneCards" id="LRRIQ1"/>
<dbReference type="HGNC" id="HGNC:25708">
    <property type="gene designation" value="LRRIQ1"/>
</dbReference>
<dbReference type="HPA" id="ENSG00000133640">
    <property type="expression patterns" value="Group enriched (choroid plexus, fallopian tube, retina, testis)"/>
</dbReference>
<dbReference type="MIM" id="620922">
    <property type="type" value="gene"/>
</dbReference>
<dbReference type="neXtProt" id="NX_Q96JM4"/>
<dbReference type="OpenTargets" id="ENSG00000133640"/>
<dbReference type="PharmGKB" id="PA134962087"/>
<dbReference type="VEuPathDB" id="HostDB:ENSG00000133640"/>
<dbReference type="eggNOG" id="KOG0531">
    <property type="taxonomic scope" value="Eukaryota"/>
</dbReference>
<dbReference type="GeneTree" id="ENSGT00940000162858"/>
<dbReference type="HOGENOM" id="CLU_002837_0_0_1"/>
<dbReference type="InParanoid" id="Q96JM4"/>
<dbReference type="OMA" id="KHRYAHE"/>
<dbReference type="OrthoDB" id="266138at2759"/>
<dbReference type="PAN-GO" id="Q96JM4">
    <property type="GO annotations" value="1 GO annotation based on evolutionary models"/>
</dbReference>
<dbReference type="PhylomeDB" id="Q96JM4"/>
<dbReference type="TreeFam" id="TF333460"/>
<dbReference type="PathwayCommons" id="Q96JM4"/>
<dbReference type="SignaLink" id="Q96JM4"/>
<dbReference type="BioGRID-ORCS" id="84125">
    <property type="hits" value="10 hits in 1140 CRISPR screens"/>
</dbReference>
<dbReference type="ChiTaRS" id="LRRIQ1">
    <property type="organism name" value="human"/>
</dbReference>
<dbReference type="GenomeRNAi" id="84125"/>
<dbReference type="Pharos" id="Q96JM4">
    <property type="development level" value="Tdark"/>
</dbReference>
<dbReference type="PRO" id="PR:Q96JM4"/>
<dbReference type="Proteomes" id="UP000005640">
    <property type="component" value="Chromosome 12"/>
</dbReference>
<dbReference type="RNAct" id="Q96JM4">
    <property type="molecule type" value="protein"/>
</dbReference>
<dbReference type="Bgee" id="ENSG00000133640">
    <property type="expression patterns" value="Expressed in right uterine tube and 101 other cell types or tissues"/>
</dbReference>
<dbReference type="ExpressionAtlas" id="Q96JM4">
    <property type="expression patterns" value="baseline and differential"/>
</dbReference>
<dbReference type="GO" id="GO:0015630">
    <property type="term" value="C:microtubule cytoskeleton"/>
    <property type="evidence" value="ECO:0000318"/>
    <property type="project" value="GO_Central"/>
</dbReference>
<dbReference type="GO" id="GO:0009966">
    <property type="term" value="P:regulation of signal transduction"/>
    <property type="evidence" value="ECO:0007669"/>
    <property type="project" value="UniProtKB-ARBA"/>
</dbReference>
<dbReference type="CDD" id="cd23767">
    <property type="entry name" value="IQCD"/>
    <property type="match status" value="2"/>
</dbReference>
<dbReference type="FunFam" id="3.80.10.10:FF:000660">
    <property type="entry name" value="Leucine rich repeats and IQ motif containing 1"/>
    <property type="match status" value="1"/>
</dbReference>
<dbReference type="FunFam" id="3.80.10.10:FF:001073">
    <property type="entry name" value="Leucine rich repeats and IQ motif containing 1"/>
    <property type="match status" value="1"/>
</dbReference>
<dbReference type="FunFam" id="3.80.10.10:FF:001496">
    <property type="entry name" value="Leucine rich repeats and IQ motif containing 1"/>
    <property type="match status" value="1"/>
</dbReference>
<dbReference type="Gene3D" id="1.20.5.190">
    <property type="match status" value="1"/>
</dbReference>
<dbReference type="Gene3D" id="3.80.10.10">
    <property type="entry name" value="Ribonuclease Inhibitor"/>
    <property type="match status" value="3"/>
</dbReference>
<dbReference type="InterPro" id="IPR000048">
    <property type="entry name" value="IQ_motif_EF-hand-BS"/>
</dbReference>
<dbReference type="InterPro" id="IPR001611">
    <property type="entry name" value="Leu-rich_rpt"/>
</dbReference>
<dbReference type="InterPro" id="IPR003591">
    <property type="entry name" value="Leu-rich_rpt_typical-subtyp"/>
</dbReference>
<dbReference type="InterPro" id="IPR032675">
    <property type="entry name" value="LRR_dom_sf"/>
</dbReference>
<dbReference type="InterPro" id="IPR027417">
    <property type="entry name" value="P-loop_NTPase"/>
</dbReference>
<dbReference type="InterPro" id="IPR050836">
    <property type="entry name" value="SDS22/Internalin_LRR"/>
</dbReference>
<dbReference type="PANTHER" id="PTHR46652:SF7">
    <property type="entry name" value="LEUCINE-RICH REPEAT AND IQ DOMAIN-CONTAINING PROTEIN 1"/>
    <property type="match status" value="1"/>
</dbReference>
<dbReference type="PANTHER" id="PTHR46652">
    <property type="entry name" value="LEUCINE-RICH REPEAT AND IQ DOMAIN-CONTAINING PROTEIN 1-RELATED"/>
    <property type="match status" value="1"/>
</dbReference>
<dbReference type="Pfam" id="PF00612">
    <property type="entry name" value="IQ"/>
    <property type="match status" value="2"/>
</dbReference>
<dbReference type="Pfam" id="PF13855">
    <property type="entry name" value="LRR_8"/>
    <property type="match status" value="1"/>
</dbReference>
<dbReference type="SMART" id="SM00015">
    <property type="entry name" value="IQ"/>
    <property type="match status" value="3"/>
</dbReference>
<dbReference type="SMART" id="SM00369">
    <property type="entry name" value="LRR_TYP"/>
    <property type="match status" value="4"/>
</dbReference>
<dbReference type="SUPFAM" id="SSF52058">
    <property type="entry name" value="L domain-like"/>
    <property type="match status" value="1"/>
</dbReference>
<dbReference type="SUPFAM" id="SSF52540">
    <property type="entry name" value="P-loop containing nucleoside triphosphate hydrolases"/>
    <property type="match status" value="1"/>
</dbReference>
<dbReference type="PROSITE" id="PS50096">
    <property type="entry name" value="IQ"/>
    <property type="match status" value="3"/>
</dbReference>
<dbReference type="PROSITE" id="PS51450">
    <property type="entry name" value="LRR"/>
    <property type="match status" value="11"/>
</dbReference>
<proteinExistence type="evidence at protein level"/>
<sequence>MDDDDAKLKAEIEAELDKLSISSLEKEDIESDAKSETQSDDSDTDSVELPESVLHCINIIKNRSKAVEELILQDLEDTDILSCSYGAVSNNHMHLRTGLSTEYEESSEQLIKILSEIEKEEFMRSKTDCATPDFVPEPSPHDLPMDEHVLPDDADINFGYCEVEEKCRQSFEAWQEKQKELEDKEKQTLKAQRDREEKQFQEEEEKRHCWMKQFKVEKKKLENIQKQEQDKMNDELYKEEKIWKEKFKQHEEYIRNLHLQMEEERTRFKDQQEKEKNSLLKQQNNAAVKIQAKYKAFVAYQKYGPIIKEQIESKKRKAQEWKEKEAKIRQKEEENRKRLEEEQRIKEERKKQKEEERKRREKEYEEKKNIVKQEREQLISKEKIILREDASQQLIISSALKKSGYNNKHLSLEDISNDKGDIAKNLVDENSKKQEDVLLWLVEESNMKENVDRQTILKESIQVKLKESISSQTILADFKMEEKNENLAKKRCSEELVKQERKYENTDNKTELGNSDLKGNLKEQFPLQELKSDAQKEEKIMKHVINENTGQKTQIILGHNQEISEVKTNEEQKIIKDNQQKKIQKVEKEEIQEQNGLLYKDKDTLVISVKQRSLSLTSENSKDVRENVILQEKEIYSKSKEIEENPKDNAWNSGIVIFNTTDTMINIEGKRNDQDYVLGRHAPCEGLSNYNAESSMVSKEVNSLKSEIRNISEKCHENAPEPDSMTCCVSESTLLYSIEERRLAWIKSFKPWLEIFKQNQQKKIVRRKRPVKCPANMTPALDKLEILRCGPWDTLQQVTTVTFQDLPGCVLSTLAECTNLQFLSLRRCGLTSLHSLSNCKKLKYIDAQENHIEAIECENLENLCVVLLNKNQLTSLHGLDGCTNIQCLELSYNKITRIGYSFFLEEKLVDNAGFCHHLGTSTSYLSLAQVWIPTGLCWSWIPITSLTKNSDCNFLISHLYWNCGLESLKNLQQLILDHNQLINTKGLCDTPTIVYLDCSHNHLTDVEGVENCGLLQILKLQGNYLSELPSLENLVLLRELHLDDNSISTVEAFSSYWLPLLQNITISQNSLTKIVPLFHFVSLEKLDVSHNCLSDLKSAIKWFDACYSLHELSLTGNPLLQETNWRDSLLKVLPALRILNGNILNSNSESRTEEHNQLGSAGFLALCQSQIREFNLLIENYITGKGDVFTLDTAENLCHYFKKLMILSTEYRHAHERGDVTITKKDESEAQKNHLAPTNSDSTLQNGVFYSCAREGEPDSPDIPEKWMDSVSSHSPLSKSATCENMEGRHQEILVCQKREDSKASSIPTIRIPFKEVVMTNSLLRNHQNIEPSEKIMAAVVIQSYWRGYLMRRQTHFSTRLHTAATEGLPNSSIKNQTILKKGKRENIVNIRKQREKAAILIQAVWKGFILRKKLTTALEAIKNEESDEEYREIDLEDFIFDEAALEEEWLALDSTRFPSQTLLLSNQLHWPKIPGNLKWDDTSFNLPSNPAQAWLCNDKENLSSSEHTQFNSRSENKTSSWTPESKTSRKSLLKSEKEKKISEEWGFKDISTAQQMLKRAQKMKSKKLKKKIDSTVRLALFKNNENKVSLPKSPKMVQPRRDGYFEGIEEDPIHKDTTANEKLERNREYTYQWLHTQVGVHETTSSRNMKCNHFLPELDPDVLNGGRVQLVARLVSREDTDLDLFSMTNGSALSVNREKKNQAHRHSAGSSSKLWFPSKLI</sequence>
<reference key="1">
    <citation type="journal article" date="2006" name="Nature">
        <title>The finished DNA sequence of human chromosome 12.</title>
        <authorList>
            <person name="Scherer S.E."/>
            <person name="Muzny D.M."/>
            <person name="Buhay C.J."/>
            <person name="Chen R."/>
            <person name="Cree A."/>
            <person name="Ding Y."/>
            <person name="Dugan-Rocha S."/>
            <person name="Gill R."/>
            <person name="Gunaratne P."/>
            <person name="Harris R.A."/>
            <person name="Hawes A.C."/>
            <person name="Hernandez J."/>
            <person name="Hodgson A.V."/>
            <person name="Hume J."/>
            <person name="Jackson A."/>
            <person name="Khan Z.M."/>
            <person name="Kovar-Smith C."/>
            <person name="Lewis L.R."/>
            <person name="Lozado R.J."/>
            <person name="Metzker M.L."/>
            <person name="Milosavljevic A."/>
            <person name="Miner G.R."/>
            <person name="Montgomery K.T."/>
            <person name="Morgan M.B."/>
            <person name="Nazareth L.V."/>
            <person name="Scott G."/>
            <person name="Sodergren E."/>
            <person name="Song X.-Z."/>
            <person name="Steffen D."/>
            <person name="Lovering R.C."/>
            <person name="Wheeler D.A."/>
            <person name="Worley K.C."/>
            <person name="Yuan Y."/>
            <person name="Zhang Z."/>
            <person name="Adams C.Q."/>
            <person name="Ansari-Lari M.A."/>
            <person name="Ayele M."/>
            <person name="Brown M.J."/>
            <person name="Chen G."/>
            <person name="Chen Z."/>
            <person name="Clerc-Blankenburg K.P."/>
            <person name="Davis C."/>
            <person name="Delgado O."/>
            <person name="Dinh H.H."/>
            <person name="Draper H."/>
            <person name="Gonzalez-Garay M.L."/>
            <person name="Havlak P."/>
            <person name="Jackson L.R."/>
            <person name="Jacob L.S."/>
            <person name="Kelly S.H."/>
            <person name="Li L."/>
            <person name="Li Z."/>
            <person name="Liu J."/>
            <person name="Liu W."/>
            <person name="Lu J."/>
            <person name="Maheshwari M."/>
            <person name="Nguyen B.-V."/>
            <person name="Okwuonu G.O."/>
            <person name="Pasternak S."/>
            <person name="Perez L.M."/>
            <person name="Plopper F.J.H."/>
            <person name="Santibanez J."/>
            <person name="Shen H."/>
            <person name="Tabor P.E."/>
            <person name="Verduzco D."/>
            <person name="Waldron L."/>
            <person name="Wang Q."/>
            <person name="Williams G.A."/>
            <person name="Zhang J."/>
            <person name="Zhou J."/>
            <person name="Allen C.C."/>
            <person name="Amin A.G."/>
            <person name="Anyalebechi V."/>
            <person name="Bailey M."/>
            <person name="Barbaria J.A."/>
            <person name="Bimage K.E."/>
            <person name="Bryant N.P."/>
            <person name="Burch P.E."/>
            <person name="Burkett C.E."/>
            <person name="Burrell K.L."/>
            <person name="Calderon E."/>
            <person name="Cardenas V."/>
            <person name="Carter K."/>
            <person name="Casias K."/>
            <person name="Cavazos I."/>
            <person name="Cavazos S.R."/>
            <person name="Ceasar H."/>
            <person name="Chacko J."/>
            <person name="Chan S.N."/>
            <person name="Chavez D."/>
            <person name="Christopoulos C."/>
            <person name="Chu J."/>
            <person name="Cockrell R."/>
            <person name="Cox C.D."/>
            <person name="Dang M."/>
            <person name="Dathorne S.R."/>
            <person name="David R."/>
            <person name="Davis C.M."/>
            <person name="Davy-Carroll L."/>
            <person name="Deshazo D.R."/>
            <person name="Donlin J.E."/>
            <person name="D'Souza L."/>
            <person name="Eaves K.A."/>
            <person name="Egan A."/>
            <person name="Emery-Cohen A.J."/>
            <person name="Escotto M."/>
            <person name="Flagg N."/>
            <person name="Forbes L.D."/>
            <person name="Gabisi A.M."/>
            <person name="Garza M."/>
            <person name="Hamilton C."/>
            <person name="Henderson N."/>
            <person name="Hernandez O."/>
            <person name="Hines S."/>
            <person name="Hogues M.E."/>
            <person name="Huang M."/>
            <person name="Idlebird D.G."/>
            <person name="Johnson R."/>
            <person name="Jolivet A."/>
            <person name="Jones S."/>
            <person name="Kagan R."/>
            <person name="King L.M."/>
            <person name="Leal B."/>
            <person name="Lebow H."/>
            <person name="Lee S."/>
            <person name="LeVan J.M."/>
            <person name="Lewis L.C."/>
            <person name="London P."/>
            <person name="Lorensuhewa L.M."/>
            <person name="Loulseged H."/>
            <person name="Lovett D.A."/>
            <person name="Lucier A."/>
            <person name="Lucier R.L."/>
            <person name="Ma J."/>
            <person name="Madu R.C."/>
            <person name="Mapua P."/>
            <person name="Martindale A.D."/>
            <person name="Martinez E."/>
            <person name="Massey E."/>
            <person name="Mawhiney S."/>
            <person name="Meador M.G."/>
            <person name="Mendez S."/>
            <person name="Mercado C."/>
            <person name="Mercado I.C."/>
            <person name="Merritt C.E."/>
            <person name="Miner Z.L."/>
            <person name="Minja E."/>
            <person name="Mitchell T."/>
            <person name="Mohabbat F."/>
            <person name="Mohabbat K."/>
            <person name="Montgomery B."/>
            <person name="Moore N."/>
            <person name="Morris S."/>
            <person name="Munidasa M."/>
            <person name="Ngo R.N."/>
            <person name="Nguyen N.B."/>
            <person name="Nickerson E."/>
            <person name="Nwaokelemeh O.O."/>
            <person name="Nwokenkwo S."/>
            <person name="Obregon M."/>
            <person name="Oguh M."/>
            <person name="Oragunye N."/>
            <person name="Oviedo R.J."/>
            <person name="Parish B.J."/>
            <person name="Parker D.N."/>
            <person name="Parrish J."/>
            <person name="Parks K.L."/>
            <person name="Paul H.A."/>
            <person name="Payton B.A."/>
            <person name="Perez A."/>
            <person name="Perrin W."/>
            <person name="Pickens A."/>
            <person name="Primus E.L."/>
            <person name="Pu L.-L."/>
            <person name="Puazo M."/>
            <person name="Quiles M.M."/>
            <person name="Quiroz J.B."/>
            <person name="Rabata D."/>
            <person name="Reeves K."/>
            <person name="Ruiz S.J."/>
            <person name="Shao H."/>
            <person name="Sisson I."/>
            <person name="Sonaike T."/>
            <person name="Sorelle R.P."/>
            <person name="Sutton A.E."/>
            <person name="Svatek A.F."/>
            <person name="Svetz L.A."/>
            <person name="Tamerisa K.S."/>
            <person name="Taylor T.R."/>
            <person name="Teague B."/>
            <person name="Thomas N."/>
            <person name="Thorn R.D."/>
            <person name="Trejos Z.Y."/>
            <person name="Trevino B.K."/>
            <person name="Ukegbu O.N."/>
            <person name="Urban J.B."/>
            <person name="Vasquez L.I."/>
            <person name="Vera V.A."/>
            <person name="Villasana D.M."/>
            <person name="Wang L."/>
            <person name="Ward-Moore S."/>
            <person name="Warren J.T."/>
            <person name="Wei X."/>
            <person name="White F."/>
            <person name="Williamson A.L."/>
            <person name="Wleczyk R."/>
            <person name="Wooden H.S."/>
            <person name="Wooden S.H."/>
            <person name="Yen J."/>
            <person name="Yoon L."/>
            <person name="Yoon V."/>
            <person name="Zorrilla S.E."/>
            <person name="Nelson D."/>
            <person name="Kucherlapati R."/>
            <person name="Weinstock G."/>
            <person name="Gibbs R.A."/>
        </authorList>
    </citation>
    <scope>NUCLEOTIDE SEQUENCE [LARGE SCALE GENOMIC DNA]</scope>
</reference>
<reference key="2">
    <citation type="journal article" date="2004" name="Nat. Genet.">
        <title>Complete sequencing and characterization of 21,243 full-length human cDNAs.</title>
        <authorList>
            <person name="Ota T."/>
            <person name="Suzuki Y."/>
            <person name="Nishikawa T."/>
            <person name="Otsuki T."/>
            <person name="Sugiyama T."/>
            <person name="Irie R."/>
            <person name="Wakamatsu A."/>
            <person name="Hayashi K."/>
            <person name="Sato H."/>
            <person name="Nagai K."/>
            <person name="Kimura K."/>
            <person name="Makita H."/>
            <person name="Sekine M."/>
            <person name="Obayashi M."/>
            <person name="Nishi T."/>
            <person name="Shibahara T."/>
            <person name="Tanaka T."/>
            <person name="Ishii S."/>
            <person name="Yamamoto J."/>
            <person name="Saito K."/>
            <person name="Kawai Y."/>
            <person name="Isono Y."/>
            <person name="Nakamura Y."/>
            <person name="Nagahari K."/>
            <person name="Murakami K."/>
            <person name="Yasuda T."/>
            <person name="Iwayanagi T."/>
            <person name="Wagatsuma M."/>
            <person name="Shiratori A."/>
            <person name="Sudo H."/>
            <person name="Hosoiri T."/>
            <person name="Kaku Y."/>
            <person name="Kodaira H."/>
            <person name="Kondo H."/>
            <person name="Sugawara M."/>
            <person name="Takahashi M."/>
            <person name="Kanda K."/>
            <person name="Yokoi T."/>
            <person name="Furuya T."/>
            <person name="Kikkawa E."/>
            <person name="Omura Y."/>
            <person name="Abe K."/>
            <person name="Kamihara K."/>
            <person name="Katsuta N."/>
            <person name="Sato K."/>
            <person name="Tanikawa M."/>
            <person name="Yamazaki M."/>
            <person name="Ninomiya K."/>
            <person name="Ishibashi T."/>
            <person name="Yamashita H."/>
            <person name="Murakawa K."/>
            <person name="Fujimori K."/>
            <person name="Tanai H."/>
            <person name="Kimata M."/>
            <person name="Watanabe M."/>
            <person name="Hiraoka S."/>
            <person name="Chiba Y."/>
            <person name="Ishida S."/>
            <person name="Ono Y."/>
            <person name="Takiguchi S."/>
            <person name="Watanabe S."/>
            <person name="Yosida M."/>
            <person name="Hotuta T."/>
            <person name="Kusano J."/>
            <person name="Kanehori K."/>
            <person name="Takahashi-Fujii A."/>
            <person name="Hara H."/>
            <person name="Tanase T.-O."/>
            <person name="Nomura Y."/>
            <person name="Togiya S."/>
            <person name="Komai F."/>
            <person name="Hara R."/>
            <person name="Takeuchi K."/>
            <person name="Arita M."/>
            <person name="Imose N."/>
            <person name="Musashino K."/>
            <person name="Yuuki H."/>
            <person name="Oshima A."/>
            <person name="Sasaki N."/>
            <person name="Aotsuka S."/>
            <person name="Yoshikawa Y."/>
            <person name="Matsunawa H."/>
            <person name="Ichihara T."/>
            <person name="Shiohata N."/>
            <person name="Sano S."/>
            <person name="Moriya S."/>
            <person name="Momiyama H."/>
            <person name="Satoh N."/>
            <person name="Takami S."/>
            <person name="Terashima Y."/>
            <person name="Suzuki O."/>
            <person name="Nakagawa S."/>
            <person name="Senoh A."/>
            <person name="Mizoguchi H."/>
            <person name="Goto Y."/>
            <person name="Shimizu F."/>
            <person name="Wakebe H."/>
            <person name="Hishigaki H."/>
            <person name="Watanabe T."/>
            <person name="Sugiyama A."/>
            <person name="Takemoto M."/>
            <person name="Kawakami B."/>
            <person name="Yamazaki M."/>
            <person name="Watanabe K."/>
            <person name="Kumagai A."/>
            <person name="Itakura S."/>
            <person name="Fukuzumi Y."/>
            <person name="Fujimori Y."/>
            <person name="Komiyama M."/>
            <person name="Tashiro H."/>
            <person name="Tanigami A."/>
            <person name="Fujiwara T."/>
            <person name="Ono T."/>
            <person name="Yamada K."/>
            <person name="Fujii Y."/>
            <person name="Ozaki K."/>
            <person name="Hirao M."/>
            <person name="Ohmori Y."/>
            <person name="Kawabata A."/>
            <person name="Hikiji T."/>
            <person name="Kobatake N."/>
            <person name="Inagaki H."/>
            <person name="Ikema Y."/>
            <person name="Okamoto S."/>
            <person name="Okitani R."/>
            <person name="Kawakami T."/>
            <person name="Noguchi S."/>
            <person name="Itoh T."/>
            <person name="Shigeta K."/>
            <person name="Senba T."/>
            <person name="Matsumura K."/>
            <person name="Nakajima Y."/>
            <person name="Mizuno T."/>
            <person name="Morinaga M."/>
            <person name="Sasaki M."/>
            <person name="Togashi T."/>
            <person name="Oyama M."/>
            <person name="Hata H."/>
            <person name="Watanabe M."/>
            <person name="Komatsu T."/>
            <person name="Mizushima-Sugano J."/>
            <person name="Satoh T."/>
            <person name="Shirai Y."/>
            <person name="Takahashi Y."/>
            <person name="Nakagawa K."/>
            <person name="Okumura K."/>
            <person name="Nagase T."/>
            <person name="Nomura N."/>
            <person name="Kikuchi H."/>
            <person name="Masuho Y."/>
            <person name="Yamashita R."/>
            <person name="Nakai K."/>
            <person name="Yada T."/>
            <person name="Nakamura Y."/>
            <person name="Ohara O."/>
            <person name="Isogai T."/>
            <person name="Sugano S."/>
        </authorList>
    </citation>
    <scope>NUCLEOTIDE SEQUENCE [LARGE SCALE MRNA] OF 1-534 (ISOFORM 1)</scope>
    <scope>VARIANTS ASN-29 AND TYR-83</scope>
    <source>
        <tissue>Mammary gland</tissue>
    </source>
</reference>
<reference key="3">
    <citation type="journal article" date="2004" name="Genome Res.">
        <title>The status, quality, and expansion of the NIH full-length cDNA project: the Mammalian Gene Collection (MGC).</title>
        <authorList>
            <consortium name="The MGC Project Team"/>
        </authorList>
    </citation>
    <scope>NUCLEOTIDE SEQUENCE [LARGE SCALE MRNA] OF 1-310 (ISOFORM 2)</scope>
    <source>
        <tissue>Spinal cord</tissue>
    </source>
</reference>
<reference key="4">
    <citation type="journal article" date="2001" name="DNA Res.">
        <title>Prediction of the coding sequences of unidentified human genes. XX. The complete sequences of 100 new cDNA clones from brain which code for large proteins in vitro.</title>
        <authorList>
            <person name="Nagase T."/>
            <person name="Nakayama M."/>
            <person name="Nakajima D."/>
            <person name="Kikuno R."/>
            <person name="Ohara O."/>
        </authorList>
    </citation>
    <scope>NUCLEOTIDE SEQUENCE [LARGE SCALE MRNA] OF 118-1335 (ISOFORM 1)</scope>
    <scope>VARIANT THR-912</scope>
    <source>
        <tissue>Brain</tissue>
    </source>
</reference>
<comment type="alternative products">
    <event type="alternative splicing"/>
    <isoform>
        <id>Q96JM4-4</id>
        <name>1</name>
        <sequence type="displayed"/>
    </isoform>
    <isoform>
        <id>Q96JM4-2</id>
        <name>2</name>
        <sequence type="described" ref="VSP_030065"/>
    </isoform>
</comment>
<comment type="sequence caution" evidence="6">
    <conflict type="miscellaneous discrepancy">
        <sequence resource="EMBL-CDS" id="AAH93088"/>
    </conflict>
    <text>Contaminating sequence. Potential poly-A sequence.</text>
</comment>
<comment type="sequence caution" evidence="6">
    <conflict type="erroneous initiation">
        <sequence resource="EMBL-CDS" id="BAB47430"/>
    </conflict>
    <text>Extended N-terminus.</text>
</comment>
<comment type="sequence caution" evidence="6">
    <conflict type="miscellaneous discrepancy">
        <sequence resource="EMBL-CDS" id="BAB47430"/>
    </conflict>
    <text>Probable cloning artifact.</text>
</comment>
<protein>
    <recommendedName>
        <fullName>Leucine-rich repeat- and IQ domain-containing protein 1</fullName>
    </recommendedName>
</protein>
<evidence type="ECO:0000255" key="1">
    <source>
        <dbReference type="PROSITE-ProRule" id="PRU00116"/>
    </source>
</evidence>
<evidence type="ECO:0000256" key="2">
    <source>
        <dbReference type="SAM" id="MobiDB-lite"/>
    </source>
</evidence>
<evidence type="ECO:0000269" key="3">
    <source>
    </source>
</evidence>
<evidence type="ECO:0000269" key="4">
    <source>
    </source>
</evidence>
<evidence type="ECO:0000303" key="5">
    <source>
    </source>
</evidence>
<evidence type="ECO:0000305" key="6"/>
<gene>
    <name type="primary">LRRIQ1</name>
    <name type="synonym">KIAA1801</name>
</gene>